<feature type="chain" id="PRO_1000004706" description="Glutamyl-tRNA reductase">
    <location>
        <begin position="1"/>
        <end position="417"/>
    </location>
</feature>
<feature type="active site" description="Nucleophile" evidence="1">
    <location>
        <position position="50"/>
    </location>
</feature>
<feature type="binding site" evidence="1">
    <location>
        <begin position="49"/>
        <end position="52"/>
    </location>
    <ligand>
        <name>substrate</name>
    </ligand>
</feature>
<feature type="binding site" evidence="1">
    <location>
        <position position="109"/>
    </location>
    <ligand>
        <name>substrate</name>
    </ligand>
</feature>
<feature type="binding site" evidence="1">
    <location>
        <begin position="114"/>
        <end position="116"/>
    </location>
    <ligand>
        <name>substrate</name>
    </ligand>
</feature>
<feature type="binding site" evidence="1">
    <location>
        <position position="120"/>
    </location>
    <ligand>
        <name>substrate</name>
    </ligand>
</feature>
<feature type="binding site" evidence="1">
    <location>
        <begin position="189"/>
        <end position="194"/>
    </location>
    <ligand>
        <name>NADP(+)</name>
        <dbReference type="ChEBI" id="CHEBI:58349"/>
    </ligand>
</feature>
<feature type="site" description="Important for activity" evidence="1">
    <location>
        <position position="99"/>
    </location>
</feature>
<protein>
    <recommendedName>
        <fullName evidence="1">Glutamyl-tRNA reductase</fullName>
        <shortName evidence="1">GluTR</shortName>
        <ecNumber evidence="1">1.2.1.70</ecNumber>
    </recommendedName>
</protein>
<gene>
    <name evidence="1" type="primary">hemA</name>
    <name type="ordered locus">SSA_0484</name>
</gene>
<organism>
    <name type="scientific">Streptococcus sanguinis (strain SK36)</name>
    <dbReference type="NCBI Taxonomy" id="388919"/>
    <lineage>
        <taxon>Bacteria</taxon>
        <taxon>Bacillati</taxon>
        <taxon>Bacillota</taxon>
        <taxon>Bacilli</taxon>
        <taxon>Lactobacillales</taxon>
        <taxon>Streptococcaceae</taxon>
        <taxon>Streptococcus</taxon>
    </lineage>
</organism>
<accession>A3CL77</accession>
<proteinExistence type="inferred from homology"/>
<evidence type="ECO:0000255" key="1">
    <source>
        <dbReference type="HAMAP-Rule" id="MF_00087"/>
    </source>
</evidence>
<keyword id="KW-0521">NADP</keyword>
<keyword id="KW-0560">Oxidoreductase</keyword>
<keyword id="KW-0627">Porphyrin biosynthesis</keyword>
<keyword id="KW-1185">Reference proteome</keyword>
<sequence length="417" mass="47561">MHLLYVGLTHRETPLTILEKAHFSDQEGLKALKLLKREKSILENIILSTCNRTELYLVVDQLHTGRYYSKHFLADWFQIPVKELEEYLVFREGDEALRHLLRVSIGLESKIVGESQVLGQLKQAFLTAQDAGTTGIVLNQAFKQALTFAKRMHDTYRINDRPISIGLTAIQELDRMGLDYSTKKIAVIGLGEIGQLVTKYALQRPFESVMLLNRTVSKAQAFLTEDRVSAHGWDELEEVLADADVVFSAVKTEEYIIFPSMLKEGAIVFDLCLPRSCHPSSSLKLYNIENLTNQLEQYKAERQEIAGRIALEIDEELVKFADWRQQLGIIPLIQEIRDKALEAQASAMESLNRKIPDLTEREQKQISKHMKSIINQVLKEPILQLKELSVGEHSDYDIALIAKIFGLHRERGKDEGH</sequence>
<dbReference type="EC" id="1.2.1.70" evidence="1"/>
<dbReference type="EMBL" id="CP000387">
    <property type="protein sequence ID" value="ABN43932.1"/>
    <property type="molecule type" value="Genomic_DNA"/>
</dbReference>
<dbReference type="RefSeq" id="WP_011836538.1">
    <property type="nucleotide sequence ID" value="NC_009009.1"/>
</dbReference>
<dbReference type="RefSeq" id="YP_001034482.1">
    <property type="nucleotide sequence ID" value="NC_009009.1"/>
</dbReference>
<dbReference type="SMR" id="A3CL77"/>
<dbReference type="STRING" id="388919.SSA_0484"/>
<dbReference type="KEGG" id="ssa:SSA_0484"/>
<dbReference type="PATRIC" id="fig|388919.9.peg.468"/>
<dbReference type="eggNOG" id="COG0373">
    <property type="taxonomic scope" value="Bacteria"/>
</dbReference>
<dbReference type="HOGENOM" id="CLU_035113_2_2_9"/>
<dbReference type="OrthoDB" id="110209at2"/>
<dbReference type="UniPathway" id="UPA00251">
    <property type="reaction ID" value="UER00316"/>
</dbReference>
<dbReference type="Proteomes" id="UP000002148">
    <property type="component" value="Chromosome"/>
</dbReference>
<dbReference type="GO" id="GO:0008883">
    <property type="term" value="F:glutamyl-tRNA reductase activity"/>
    <property type="evidence" value="ECO:0007669"/>
    <property type="project" value="UniProtKB-UniRule"/>
</dbReference>
<dbReference type="GO" id="GO:0050661">
    <property type="term" value="F:NADP binding"/>
    <property type="evidence" value="ECO:0007669"/>
    <property type="project" value="InterPro"/>
</dbReference>
<dbReference type="GO" id="GO:0019353">
    <property type="term" value="P:protoporphyrinogen IX biosynthetic process from glutamate"/>
    <property type="evidence" value="ECO:0007669"/>
    <property type="project" value="TreeGrafter"/>
</dbReference>
<dbReference type="CDD" id="cd05213">
    <property type="entry name" value="NAD_bind_Glutamyl_tRNA_reduct"/>
    <property type="match status" value="1"/>
</dbReference>
<dbReference type="FunFam" id="3.30.460.30:FF:000001">
    <property type="entry name" value="Glutamyl-tRNA reductase"/>
    <property type="match status" value="1"/>
</dbReference>
<dbReference type="Gene3D" id="3.30.460.30">
    <property type="entry name" value="Glutamyl-tRNA reductase, N-terminal domain"/>
    <property type="match status" value="1"/>
</dbReference>
<dbReference type="Gene3D" id="3.40.50.720">
    <property type="entry name" value="NAD(P)-binding Rossmann-like Domain"/>
    <property type="match status" value="1"/>
</dbReference>
<dbReference type="HAMAP" id="MF_00087">
    <property type="entry name" value="Glu_tRNA_reductase"/>
    <property type="match status" value="1"/>
</dbReference>
<dbReference type="InterPro" id="IPR000343">
    <property type="entry name" value="4pyrrol_synth_GluRdtase"/>
</dbReference>
<dbReference type="InterPro" id="IPR015896">
    <property type="entry name" value="4pyrrol_synth_GluRdtase_dimer"/>
</dbReference>
<dbReference type="InterPro" id="IPR015895">
    <property type="entry name" value="4pyrrol_synth_GluRdtase_N"/>
</dbReference>
<dbReference type="InterPro" id="IPR036453">
    <property type="entry name" value="GluRdtase_dimer_dom_sf"/>
</dbReference>
<dbReference type="InterPro" id="IPR036343">
    <property type="entry name" value="GluRdtase_N_sf"/>
</dbReference>
<dbReference type="InterPro" id="IPR036291">
    <property type="entry name" value="NAD(P)-bd_dom_sf"/>
</dbReference>
<dbReference type="InterPro" id="IPR006151">
    <property type="entry name" value="Shikm_DH/Glu-tRNA_Rdtase"/>
</dbReference>
<dbReference type="NCBIfam" id="TIGR01035">
    <property type="entry name" value="hemA"/>
    <property type="match status" value="1"/>
</dbReference>
<dbReference type="PANTHER" id="PTHR43013">
    <property type="entry name" value="GLUTAMYL-TRNA REDUCTASE"/>
    <property type="match status" value="1"/>
</dbReference>
<dbReference type="PANTHER" id="PTHR43013:SF1">
    <property type="entry name" value="GLUTAMYL-TRNA REDUCTASE"/>
    <property type="match status" value="1"/>
</dbReference>
<dbReference type="Pfam" id="PF00745">
    <property type="entry name" value="GlutR_dimer"/>
    <property type="match status" value="1"/>
</dbReference>
<dbReference type="Pfam" id="PF05201">
    <property type="entry name" value="GlutR_N"/>
    <property type="match status" value="1"/>
</dbReference>
<dbReference type="Pfam" id="PF01488">
    <property type="entry name" value="Shikimate_DH"/>
    <property type="match status" value="1"/>
</dbReference>
<dbReference type="PIRSF" id="PIRSF000445">
    <property type="entry name" value="4pyrrol_synth_GluRdtase"/>
    <property type="match status" value="1"/>
</dbReference>
<dbReference type="SUPFAM" id="SSF69742">
    <property type="entry name" value="Glutamyl tRNA-reductase catalytic, N-terminal domain"/>
    <property type="match status" value="1"/>
</dbReference>
<dbReference type="SUPFAM" id="SSF69075">
    <property type="entry name" value="Glutamyl tRNA-reductase dimerization domain"/>
    <property type="match status" value="1"/>
</dbReference>
<dbReference type="SUPFAM" id="SSF51735">
    <property type="entry name" value="NAD(P)-binding Rossmann-fold domains"/>
    <property type="match status" value="1"/>
</dbReference>
<comment type="function">
    <text evidence="1">Catalyzes the NADPH-dependent reduction of glutamyl-tRNA(Glu) to glutamate 1-semialdehyde (GSA).</text>
</comment>
<comment type="catalytic activity">
    <reaction evidence="1">
        <text>(S)-4-amino-5-oxopentanoate + tRNA(Glu) + NADP(+) = L-glutamyl-tRNA(Glu) + NADPH + H(+)</text>
        <dbReference type="Rhea" id="RHEA:12344"/>
        <dbReference type="Rhea" id="RHEA-COMP:9663"/>
        <dbReference type="Rhea" id="RHEA-COMP:9680"/>
        <dbReference type="ChEBI" id="CHEBI:15378"/>
        <dbReference type="ChEBI" id="CHEBI:57501"/>
        <dbReference type="ChEBI" id="CHEBI:57783"/>
        <dbReference type="ChEBI" id="CHEBI:58349"/>
        <dbReference type="ChEBI" id="CHEBI:78442"/>
        <dbReference type="ChEBI" id="CHEBI:78520"/>
        <dbReference type="EC" id="1.2.1.70"/>
    </reaction>
</comment>
<comment type="pathway">
    <text evidence="1">Porphyrin-containing compound metabolism; protoporphyrin-IX biosynthesis; 5-aminolevulinate from L-glutamyl-tRNA(Glu): step 1/2.</text>
</comment>
<comment type="subunit">
    <text evidence="1">Homodimer.</text>
</comment>
<comment type="domain">
    <text evidence="1">Possesses an unusual extended V-shaped dimeric structure with each monomer consisting of three distinct domains arranged along a curved 'spinal' alpha-helix. The N-terminal catalytic domain specifically recognizes the glutamate moiety of the substrate. The second domain is the NADPH-binding domain, and the third C-terminal domain is responsible for dimerization.</text>
</comment>
<comment type="miscellaneous">
    <text evidence="1">During catalysis, the active site Cys acts as a nucleophile attacking the alpha-carbonyl group of tRNA-bound glutamate with the formation of a thioester intermediate between enzyme and glutamate, and the concomitant release of tRNA(Glu). The thioester intermediate is finally reduced by direct hydride transfer from NADPH, to form the product GSA.</text>
</comment>
<comment type="similarity">
    <text evidence="1">Belongs to the glutamyl-tRNA reductase family.</text>
</comment>
<name>HEM1_STRSV</name>
<reference key="1">
    <citation type="journal article" date="2007" name="J. Bacteriol.">
        <title>Genome of the opportunistic pathogen Streptococcus sanguinis.</title>
        <authorList>
            <person name="Xu P."/>
            <person name="Alves J.M."/>
            <person name="Kitten T."/>
            <person name="Brown A."/>
            <person name="Chen Z."/>
            <person name="Ozaki L.S."/>
            <person name="Manque P."/>
            <person name="Ge X."/>
            <person name="Serrano M.G."/>
            <person name="Puiu D."/>
            <person name="Hendricks S."/>
            <person name="Wang Y."/>
            <person name="Chaplin M.D."/>
            <person name="Akan D."/>
            <person name="Paik S."/>
            <person name="Peterson D.L."/>
            <person name="Macrina F.L."/>
            <person name="Buck G.A."/>
        </authorList>
    </citation>
    <scope>NUCLEOTIDE SEQUENCE [LARGE SCALE GENOMIC DNA]</scope>
    <source>
        <strain>SK36</strain>
    </source>
</reference>